<proteinExistence type="evidence at protein level"/>
<feature type="chain" id="PRO_0000094431" description="Chloride channel protein 1">
    <location>
        <begin position="1"/>
        <end position="994"/>
    </location>
</feature>
<feature type="topological domain" description="Cytoplasmic" evidence="10">
    <location>
        <begin position="1"/>
        <end position="118"/>
    </location>
</feature>
<feature type="transmembrane region" description="Helical" evidence="2">
    <location>
        <begin position="119"/>
        <end position="150"/>
    </location>
</feature>
<feature type="topological domain" description="Extracellular" evidence="10">
    <location>
        <begin position="151"/>
        <end position="158"/>
    </location>
</feature>
<feature type="transmembrane region" description="Helical" evidence="2">
    <location>
        <begin position="159"/>
        <end position="179"/>
    </location>
</feature>
<feature type="topological domain" description="Cytoplasmic" evidence="10">
    <location>
        <begin position="180"/>
        <end position="183"/>
    </location>
</feature>
<feature type="intramembrane region" description="Note=Loop between two helices" evidence="2">
    <location>
        <begin position="184"/>
        <end position="189"/>
    </location>
</feature>
<feature type="intramembrane region" description="Helical" evidence="2">
    <location>
        <begin position="190"/>
        <end position="195"/>
    </location>
</feature>
<feature type="topological domain" description="Cytoplasmic" evidence="10">
    <location>
        <begin position="196"/>
        <end position="208"/>
    </location>
</feature>
<feature type="intramembrane region" description="Helical" evidence="2">
    <location>
        <begin position="209"/>
        <end position="224"/>
    </location>
</feature>
<feature type="intramembrane region" description="Note=Loop between two helices" evidence="2">
    <location>
        <begin position="225"/>
        <end position="230"/>
    </location>
</feature>
<feature type="intramembrane region" description="Helical" evidence="2">
    <location>
        <begin position="231"/>
        <end position="246"/>
    </location>
</feature>
<feature type="topological domain" description="Cytoplasmic" evidence="10">
    <location>
        <begin position="247"/>
        <end position="268"/>
    </location>
</feature>
<feature type="intramembrane region" description="Helical" evidence="2">
    <location>
        <begin position="269"/>
        <end position="280"/>
    </location>
</feature>
<feature type="intramembrane region" description="Helical" evidence="2">
    <location>
        <begin position="281"/>
        <end position="290"/>
    </location>
</feature>
<feature type="topological domain" description="Cytoplasmic" evidence="10">
    <location>
        <begin position="291"/>
        <end position="301"/>
    </location>
</feature>
<feature type="transmembrane region" description="Helical" evidence="2">
    <location>
        <begin position="302"/>
        <end position="321"/>
    </location>
</feature>
<feature type="topological domain" description="Extracellular" evidence="10">
    <location>
        <begin position="322"/>
        <end position="347"/>
    </location>
</feature>
<feature type="transmembrane region" description="Helical" evidence="2">
    <location>
        <begin position="348"/>
        <end position="376"/>
    </location>
</feature>
<feature type="topological domain" description="Cytoplasmic" evidence="10">
    <location>
        <begin position="377"/>
        <end position="390"/>
    </location>
</feature>
<feature type="transmembrane region" description="Helical" evidence="2">
    <location>
        <begin position="391"/>
        <end position="408"/>
    </location>
</feature>
<feature type="topological domain" description="Extracellular" evidence="10">
    <location>
        <begin position="409"/>
        <end position="414"/>
    </location>
</feature>
<feature type="intramembrane region" description="Note=Loop between two helices" evidence="2">
    <location>
        <begin position="415"/>
        <end position="418"/>
    </location>
</feature>
<feature type="intramembrane region" description="Helical" evidence="2">
    <location>
        <begin position="419"/>
        <end position="426"/>
    </location>
</feature>
<feature type="topological domain" description="Extracellular" evidence="10">
    <location>
        <begin position="427"/>
        <end position="457"/>
    </location>
</feature>
<feature type="intramembrane region" description="Helical" evidence="2">
    <location>
        <begin position="458"/>
        <end position="475"/>
    </location>
</feature>
<feature type="intramembrane region" description="Note=Loop between two helices" evidence="2">
    <location>
        <begin position="476"/>
        <end position="482"/>
    </location>
</feature>
<feature type="intramembrane region" description="Helical" evidence="2">
    <location>
        <begin position="483"/>
        <end position="498"/>
    </location>
</feature>
<feature type="topological domain" description="Extracellular" evidence="10">
    <location>
        <begin position="499"/>
        <end position="521"/>
    </location>
</feature>
<feature type="intramembrane region" description="Helical" evidence="2">
    <location>
        <begin position="522"/>
        <end position="538"/>
    </location>
</feature>
<feature type="intramembrane region" description="Note=Loop between two helices" evidence="2">
    <location>
        <begin position="539"/>
        <end position="540"/>
    </location>
</feature>
<feature type="intramembrane region" description="Helical" evidence="2">
    <location>
        <begin position="541"/>
        <end position="554"/>
    </location>
</feature>
<feature type="topological domain" description="Extracellular" evidence="10">
    <location>
        <begin position="555"/>
        <end position="557"/>
    </location>
</feature>
<feature type="intramembrane region" description="Helical" evidence="2">
    <location>
        <begin position="558"/>
        <end position="571"/>
    </location>
</feature>
<feature type="intramembrane region" description="Note=Loop between two helices" evidence="2">
    <location>
        <begin position="572"/>
        <end position="575"/>
    </location>
</feature>
<feature type="intramembrane region" description="Helical" evidence="2">
    <location>
        <begin position="576"/>
        <end position="578"/>
    </location>
</feature>
<feature type="topological domain" description="Cytoplasmic" evidence="10">
    <location>
        <begin position="579"/>
        <end position="994"/>
    </location>
</feature>
<feature type="domain" description="CBS 1" evidence="6">
    <location>
        <begin position="609"/>
        <end position="668"/>
    </location>
</feature>
<feature type="domain" description="CBS 2" evidence="6">
    <location>
        <begin position="827"/>
        <end position="882"/>
    </location>
</feature>
<feature type="region of interest" description="Disordered" evidence="7">
    <location>
        <begin position="37"/>
        <end position="61"/>
    </location>
</feature>
<feature type="region of interest" description="Disordered" evidence="7">
    <location>
        <begin position="710"/>
        <end position="769"/>
    </location>
</feature>
<feature type="region of interest" description="Disordered" evidence="7">
    <location>
        <begin position="880"/>
        <end position="923"/>
    </location>
</feature>
<feature type="region of interest" description="Disordered" evidence="7">
    <location>
        <begin position="965"/>
        <end position="994"/>
    </location>
</feature>
<feature type="short sequence motif" description="Selectivity filter part_1" evidence="1">
    <location>
        <begin position="188"/>
        <end position="192"/>
    </location>
</feature>
<feature type="short sequence motif" description="Selectivity filter part_2" evidence="1">
    <location>
        <begin position="230"/>
        <end position="234"/>
    </location>
</feature>
<feature type="short sequence motif" description="Selectivity filter part_3" evidence="1">
    <location>
        <begin position="482"/>
        <end position="486"/>
    </location>
</feature>
<feature type="compositionally biased region" description="Pro residues" evidence="7">
    <location>
        <begin position="725"/>
        <end position="741"/>
    </location>
</feature>
<feature type="compositionally biased region" description="Acidic residues" evidence="7">
    <location>
        <begin position="985"/>
        <end position="994"/>
    </location>
</feature>
<feature type="binding site" evidence="3">
    <location>
        <position position="189"/>
    </location>
    <ligand>
        <name>chloride</name>
        <dbReference type="ChEBI" id="CHEBI:17996"/>
    </ligand>
</feature>
<feature type="binding site" evidence="3">
    <location>
        <position position="484"/>
    </location>
    <ligand>
        <name>chloride</name>
        <dbReference type="ChEBI" id="CHEBI:17996"/>
    </ligand>
</feature>
<feature type="binding site" evidence="3">
    <location>
        <position position="578"/>
    </location>
    <ligand>
        <name>chloride</name>
        <dbReference type="ChEBI" id="CHEBI:17996"/>
    </ligand>
</feature>
<feature type="site" description="Protopore gate" evidence="2">
    <location>
        <position position="232"/>
    </location>
</feature>
<feature type="modified residue" description="Phosphoserine" evidence="11">
    <location>
        <position position="892"/>
    </location>
</feature>
<sequence>MERSQSQQHGGEQSWWGTAPQYQYMPFEHCTSYGLPSENGGLQHRPRKDLGPRHNAHPTQIYGHHKEQYSYQAQDRGIPKKTDSSSTVDSLDEDHYSKCQDCVHRLGRVLRRKLGEDWIFLVLLGLLMALVSWCMDYVSAKSLQAYKWTYAQMQPSLPLQYLAWVTFPLILILFSALFCQLISPQAVGSGIPEMKTILRGVVLKEYLTLKAFVAKVVALTAGLGSGIPVGKEGPFVHIASICAAVLSKFMSMFSGVYEQPYYYTDILTVGCAVGVGCCFGTPLGGVLFSIEVTSTYFAVRNYWRGFFAATFSAFVFRVLAVWNKDAVTITALFRTNFRMDFPFDLKELPAFAVIGICCGFLGAVFVYLHRQVMLGVRKHKALSQFLAKHRLLYPGIVTFVIASLTFPPGMGQFMAGELMPREAISTLFDNNTWVKHIGDPKSLGQSAVWIHPQVNVVIIILLFFVMKFWMSIVATTMPIPCGGFMPVFVLGAAFGRLVGEIMAMLFPEGILFDDIIYKILPGGYAVIGAAALTGAVSHTVSTAVICFELTGQIAHILPMMVAVILANMVAQSLQPSLYDSIIQVKKLPYLPDLGWNQLSKFTIFVEDIMVRDVKFVSASCTYGELRNLLQTTTVKTLPLVDSKDSMILLGSVERSELQSLLQRHLCAERRLKAAQDMARKLSELPYNGQAQLAGEWHPGGRPESFAFVDEDEDEDVSRKTELPQTPTPPPPPPPPLPPQFPIAPSYPEEPNGPLPSHKQPPEASDSADQRSSIFQRLLHCLLGKAHSTKKKITQDSTDLVDNMSPEEIEAWEREQLSQPVCFDFCCIDQSPFQLVEQTTLHKTHTLFSLLGLHLAYVTSMGKLRGVLALEELQKAIKGHTKSGVQLRPPLASFRNTTSIRKTPGGPPPPAESWNVPEGEDGAPEREVMVPTMPETPVPPPSPEVPSCLAPARVEGELEELEMVGNLGPEEDLADILHGPSLRSTDEEDEDELIL</sequence>
<name>CLCN1_RAT</name>
<accession>P35524</accession>
<dbReference type="EMBL" id="X62894">
    <property type="protein sequence ID" value="CAA44683.1"/>
    <property type="molecule type" value="mRNA"/>
</dbReference>
<dbReference type="PIR" id="S19595">
    <property type="entry name" value="S19595"/>
</dbReference>
<dbReference type="RefSeq" id="NP_037279.1">
    <property type="nucleotide sequence ID" value="NM_013147.1"/>
</dbReference>
<dbReference type="SMR" id="P35524"/>
<dbReference type="BioGRID" id="247717">
    <property type="interactions" value="3"/>
</dbReference>
<dbReference type="FunCoup" id="P35524">
    <property type="interactions" value="117"/>
</dbReference>
<dbReference type="STRING" id="10116.ENSRNOP00000043372"/>
<dbReference type="BindingDB" id="P35524"/>
<dbReference type="ChEMBL" id="CHEMBL4524038"/>
<dbReference type="GlyGen" id="P35524">
    <property type="glycosylation" value="1 site"/>
</dbReference>
<dbReference type="iPTMnet" id="P35524"/>
<dbReference type="PhosphoSitePlus" id="P35524"/>
<dbReference type="SwissPalm" id="P35524"/>
<dbReference type="PaxDb" id="10116-ENSRNOP00000043372"/>
<dbReference type="GeneID" id="25688"/>
<dbReference type="KEGG" id="rno:25688"/>
<dbReference type="UCSC" id="RGD:2360">
    <property type="organism name" value="rat"/>
</dbReference>
<dbReference type="AGR" id="RGD:2360"/>
<dbReference type="CTD" id="1180"/>
<dbReference type="RGD" id="2360">
    <property type="gene designation" value="Clcn1"/>
</dbReference>
<dbReference type="eggNOG" id="KOG0476">
    <property type="taxonomic scope" value="Eukaryota"/>
</dbReference>
<dbReference type="InParanoid" id="P35524"/>
<dbReference type="OrthoDB" id="4564at2759"/>
<dbReference type="PhylomeDB" id="P35524"/>
<dbReference type="Reactome" id="R-RNO-2672351">
    <property type="pathway name" value="Stimuli-sensing channels"/>
</dbReference>
<dbReference type="PRO" id="PR:P35524"/>
<dbReference type="Proteomes" id="UP000002494">
    <property type="component" value="Unplaced"/>
</dbReference>
<dbReference type="GO" id="GO:0034707">
    <property type="term" value="C:chloride channel complex"/>
    <property type="evidence" value="ECO:0007669"/>
    <property type="project" value="UniProtKB-KW"/>
</dbReference>
<dbReference type="GO" id="GO:0005886">
    <property type="term" value="C:plasma membrane"/>
    <property type="evidence" value="ECO:0000250"/>
    <property type="project" value="UniProtKB"/>
</dbReference>
<dbReference type="GO" id="GO:0042383">
    <property type="term" value="C:sarcolemma"/>
    <property type="evidence" value="ECO:0000266"/>
    <property type="project" value="RGD"/>
</dbReference>
<dbReference type="GO" id="GO:0030315">
    <property type="term" value="C:T-tubule"/>
    <property type="evidence" value="ECO:0007669"/>
    <property type="project" value="UniProtKB-SubCell"/>
</dbReference>
<dbReference type="GO" id="GO:0042803">
    <property type="term" value="F:protein homodimerization activity"/>
    <property type="evidence" value="ECO:0000250"/>
    <property type="project" value="UniProtKB"/>
</dbReference>
<dbReference type="GO" id="GO:0005247">
    <property type="term" value="F:voltage-gated chloride channel activity"/>
    <property type="evidence" value="ECO:0000314"/>
    <property type="project" value="RGD"/>
</dbReference>
<dbReference type="GO" id="GO:1902476">
    <property type="term" value="P:chloride transmembrane transport"/>
    <property type="evidence" value="ECO:0000266"/>
    <property type="project" value="RGD"/>
</dbReference>
<dbReference type="GO" id="GO:0006821">
    <property type="term" value="P:chloride transport"/>
    <property type="evidence" value="ECO:0000314"/>
    <property type="project" value="RGD"/>
</dbReference>
<dbReference type="GO" id="GO:0006936">
    <property type="term" value="P:muscle contraction"/>
    <property type="evidence" value="ECO:0000250"/>
    <property type="project" value="UniProtKB"/>
</dbReference>
<dbReference type="GO" id="GO:0019227">
    <property type="term" value="P:neuronal action potential propagation"/>
    <property type="evidence" value="ECO:0000266"/>
    <property type="project" value="RGD"/>
</dbReference>
<dbReference type="CDD" id="cd03683">
    <property type="entry name" value="ClC_1_like"/>
    <property type="match status" value="1"/>
</dbReference>
<dbReference type="FunFam" id="1.10.3080.10:FF:000003">
    <property type="entry name" value="Chloride channel 2"/>
    <property type="match status" value="1"/>
</dbReference>
<dbReference type="FunFam" id="3.10.580.10:FF:000027">
    <property type="entry name" value="Chloride channel protein"/>
    <property type="match status" value="1"/>
</dbReference>
<dbReference type="FunFam" id="3.10.580.10:FF:000030">
    <property type="entry name" value="Chloride channel protein"/>
    <property type="match status" value="1"/>
</dbReference>
<dbReference type="Gene3D" id="3.10.580.10">
    <property type="entry name" value="CBS-domain"/>
    <property type="match status" value="2"/>
</dbReference>
<dbReference type="Gene3D" id="1.10.3080.10">
    <property type="entry name" value="Clc chloride channel"/>
    <property type="match status" value="1"/>
</dbReference>
<dbReference type="InterPro" id="IPR000644">
    <property type="entry name" value="CBS_dom"/>
</dbReference>
<dbReference type="InterPro" id="IPR046342">
    <property type="entry name" value="CBS_dom_sf"/>
</dbReference>
<dbReference type="InterPro" id="IPR014743">
    <property type="entry name" value="Cl-channel_core"/>
</dbReference>
<dbReference type="InterPro" id="IPR002243">
    <property type="entry name" value="Cl_channel-1"/>
</dbReference>
<dbReference type="InterPro" id="IPR050970">
    <property type="entry name" value="Cl_channel_volt-gated"/>
</dbReference>
<dbReference type="InterPro" id="IPR001807">
    <property type="entry name" value="ClC"/>
</dbReference>
<dbReference type="PANTHER" id="PTHR45720:SF4">
    <property type="entry name" value="CHLORIDE CHANNEL PROTEIN 1"/>
    <property type="match status" value="1"/>
</dbReference>
<dbReference type="PANTHER" id="PTHR45720">
    <property type="entry name" value="CHLORIDE CHANNEL PROTEIN 2"/>
    <property type="match status" value="1"/>
</dbReference>
<dbReference type="Pfam" id="PF00654">
    <property type="entry name" value="Voltage_CLC"/>
    <property type="match status" value="1"/>
</dbReference>
<dbReference type="PRINTS" id="PR00762">
    <property type="entry name" value="CLCHANNEL"/>
</dbReference>
<dbReference type="PRINTS" id="PR01112">
    <property type="entry name" value="CLCHANNEL1"/>
</dbReference>
<dbReference type="SUPFAM" id="SSF54631">
    <property type="entry name" value="CBS-domain pair"/>
    <property type="match status" value="1"/>
</dbReference>
<dbReference type="SUPFAM" id="SSF81340">
    <property type="entry name" value="Clc chloride channel"/>
    <property type="match status" value="1"/>
</dbReference>
<dbReference type="PROSITE" id="PS51371">
    <property type="entry name" value="CBS"/>
    <property type="match status" value="2"/>
</dbReference>
<reference key="1">
    <citation type="journal article" date="1991" name="Nature">
        <title>Primary structure and functional expression of a developmentally regulated skeletal muscle chloride channel.</title>
        <authorList>
            <person name="Steinmeyer K."/>
            <person name="Ortland C."/>
            <person name="Jentsch T.J."/>
        </authorList>
    </citation>
    <scope>NUCLEOTIDE SEQUENCE [MRNA]</scope>
    <scope>FUNCTION</scope>
    <scope>TRANSPORTER ACTIVITY</scope>
    <scope>ACTIVITY REGULATION</scope>
    <scope>SUBCELLULAR LOCATION</scope>
    <scope>TISSUE SPECIFICITY</scope>
    <source>
        <tissue>Skeletal muscle</tissue>
    </source>
</reference>
<reference key="2">
    <citation type="journal article" date="1998" name="J. Gen. Physiol.">
        <title>Permeation and block of the skeletal muscle chloride channel, ClC-1, by foreign anions.</title>
        <authorList>
            <person name="Rychkov G.Y."/>
            <person name="Pusch M."/>
            <person name="Roberts M.L."/>
            <person name="Jentsch T.J."/>
            <person name="Bretag A.H."/>
        </authorList>
    </citation>
    <scope>FUNCTION</scope>
    <scope>TRANSPORTER ACTIVITY</scope>
</reference>
<reference key="3">
    <citation type="journal article" date="2012" name="Nat. Commun.">
        <title>Quantitative maps of protein phosphorylation sites across 14 different rat organs and tissues.</title>
        <authorList>
            <person name="Lundby A."/>
            <person name="Secher A."/>
            <person name="Lage K."/>
            <person name="Nordsborg N.B."/>
            <person name="Dmytriyev A."/>
            <person name="Lundby C."/>
            <person name="Olsen J.V."/>
        </authorList>
    </citation>
    <scope>PHOSPHORYLATION [LARGE SCALE ANALYSIS] AT SER-892</scope>
    <scope>IDENTIFICATION BY MASS SPECTROMETRY [LARGE SCALE ANALYSIS]</scope>
</reference>
<evidence type="ECO:0000250" key="1"/>
<evidence type="ECO:0000250" key="2">
    <source>
        <dbReference type="UniProtKB" id="P35523"/>
    </source>
</evidence>
<evidence type="ECO:0000250" key="3">
    <source>
        <dbReference type="UniProtKB" id="P37019"/>
    </source>
</evidence>
<evidence type="ECO:0000250" key="4">
    <source>
        <dbReference type="UniProtKB" id="Q64347"/>
    </source>
</evidence>
<evidence type="ECO:0000255" key="5"/>
<evidence type="ECO:0000255" key="6">
    <source>
        <dbReference type="PROSITE-ProRule" id="PRU00703"/>
    </source>
</evidence>
<evidence type="ECO:0000256" key="7">
    <source>
        <dbReference type="SAM" id="MobiDB-lite"/>
    </source>
</evidence>
<evidence type="ECO:0000269" key="8">
    <source>
    </source>
</evidence>
<evidence type="ECO:0000269" key="9">
    <source>
    </source>
</evidence>
<evidence type="ECO:0000305" key="10"/>
<evidence type="ECO:0007744" key="11">
    <source>
    </source>
</evidence>
<keyword id="KW-0129">CBS domain</keyword>
<keyword id="KW-1003">Cell membrane</keyword>
<keyword id="KW-0868">Chloride</keyword>
<keyword id="KW-0869">Chloride channel</keyword>
<keyword id="KW-0407">Ion channel</keyword>
<keyword id="KW-0406">Ion transport</keyword>
<keyword id="KW-0472">Membrane</keyword>
<keyword id="KW-0597">Phosphoprotein</keyword>
<keyword id="KW-1185">Reference proteome</keyword>
<keyword id="KW-0677">Repeat</keyword>
<keyword id="KW-0812">Transmembrane</keyword>
<keyword id="KW-1133">Transmembrane helix</keyword>
<keyword id="KW-0813">Transport</keyword>
<keyword id="KW-0851">Voltage-gated channel</keyword>
<gene>
    <name type="primary">Clcn1</name>
</gene>
<organism>
    <name type="scientific">Rattus norvegicus</name>
    <name type="common">Rat</name>
    <dbReference type="NCBI Taxonomy" id="10116"/>
    <lineage>
        <taxon>Eukaryota</taxon>
        <taxon>Metazoa</taxon>
        <taxon>Chordata</taxon>
        <taxon>Craniata</taxon>
        <taxon>Vertebrata</taxon>
        <taxon>Euteleostomi</taxon>
        <taxon>Mammalia</taxon>
        <taxon>Eutheria</taxon>
        <taxon>Euarchontoglires</taxon>
        <taxon>Glires</taxon>
        <taxon>Rodentia</taxon>
        <taxon>Myomorpha</taxon>
        <taxon>Muroidea</taxon>
        <taxon>Muridae</taxon>
        <taxon>Murinae</taxon>
        <taxon>Rattus</taxon>
    </lineage>
</organism>
<protein>
    <recommendedName>
        <fullName>Chloride channel protein 1</fullName>
        <shortName>ClC-1</shortName>
    </recommendedName>
    <alternativeName>
        <fullName>Chloride channel protein, skeletal muscle</fullName>
    </alternativeName>
</protein>
<comment type="function">
    <text evidence="2 8 9">Voltage-gated chloride channel involved in skeletal muscle excitability. Generates most of the plasma membrane chloride conductance in skeletal muscle fibers, stabilizes the resting membrane potential and contributes to the repolarization phase during action potential firing (By similarity) (PubMed:1659664, PubMed:9565403). Forms a homodimeric channel where each subunit has its own ion conduction pathway. Conducts double-barreled currents controlled by two types of gates, two fast glutamate gates that control each subunit independently and a slow common gate that opens and shuts off both subunits simultaneously. Has a significant open probability at muscle resting potential and is further activated upon membrane depolarization (By similarity). Permeable to small monovalent anions with ion selectivity for chloride &gt; thiocyanate &gt; bromide &gt; nitrate &gt; iodide (PubMed:1659664, PubMed:9565403).</text>
</comment>
<comment type="catalytic activity">
    <reaction evidence="8 9">
        <text>chloride(in) = chloride(out)</text>
        <dbReference type="Rhea" id="RHEA:29823"/>
        <dbReference type="ChEBI" id="CHEBI:17996"/>
    </reaction>
</comment>
<comment type="catalytic activity">
    <reaction evidence="9">
        <text>bromide(in) = bromide(out)</text>
        <dbReference type="Rhea" id="RHEA:75383"/>
        <dbReference type="ChEBI" id="CHEBI:15858"/>
    </reaction>
</comment>
<comment type="catalytic activity">
    <reaction evidence="9">
        <text>iodide(out) = iodide(in)</text>
        <dbReference type="Rhea" id="RHEA:66324"/>
        <dbReference type="ChEBI" id="CHEBI:16382"/>
    </reaction>
</comment>
<comment type="catalytic activity">
    <reaction evidence="9">
        <text>thiocyanate(in) = thiocyanate(out)</text>
        <dbReference type="Rhea" id="RHEA:75347"/>
        <dbReference type="ChEBI" id="CHEBI:18022"/>
    </reaction>
</comment>
<comment type="catalytic activity">
    <reaction evidence="9">
        <text>nitrate(in) = nitrate(out)</text>
        <dbReference type="Rhea" id="RHEA:34923"/>
        <dbReference type="ChEBI" id="CHEBI:17632"/>
    </reaction>
</comment>
<comment type="activity regulation">
    <text evidence="2 8">Modulated by membrane voltage with depolarization favouring channel opening and hyperpolarization favouring channel closure. Inhibited by acidic pH and ATP binding due to a shift of voltage dependence of common gating to more positive voltages. Inhibited by 9-anthracene-carboxylic acid.</text>
</comment>
<comment type="subunit">
    <text evidence="2">Homodimer.</text>
</comment>
<comment type="subcellular location">
    <subcellularLocation>
        <location evidence="8">Cell membrane</location>
        <topology evidence="5">Multi-pass membrane protein</topology>
    </subcellularLocation>
    <subcellularLocation>
        <location evidence="4">Cell membrane</location>
        <location evidence="4">Sarcolemma</location>
        <topology evidence="5">Multi-pass membrane protein</topology>
    </subcellularLocation>
    <subcellularLocation>
        <location evidence="4">Cell membrane</location>
        <location evidence="4">Sarcolemma</location>
        <location evidence="4">T-tubule</location>
        <topology evidence="5">Multi-pass membrane protein</topology>
    </subcellularLocation>
</comment>
<comment type="tissue specificity">
    <text evidence="8">Predominantly expressed in skeletal muscles.</text>
</comment>
<comment type="miscellaneous">
    <text evidence="2">Each monomer is composed of 18 alpha helices arranged in an internal pseudo-symmetry with an inverted membrane orientation. Most helices do not traverse the membrane completely.</text>
</comment>
<comment type="similarity">
    <text evidence="10">Belongs to the chloride channel (TC 2.A.49) family. ClC-1/CLCN1 subfamily.</text>
</comment>